<protein>
    <recommendedName>
        <fullName evidence="1">Homoserine O-acetyltransferase</fullName>
        <shortName evidence="1">HAT</shortName>
        <ecNumber evidence="1">2.3.1.31</ecNumber>
    </recommendedName>
    <alternativeName>
        <fullName evidence="1">Homoserine transacetylase</fullName>
        <shortName evidence="1">HTA</shortName>
    </alternativeName>
</protein>
<keyword id="KW-0012">Acyltransferase</keyword>
<keyword id="KW-0028">Amino-acid biosynthesis</keyword>
<keyword id="KW-0963">Cytoplasm</keyword>
<keyword id="KW-0486">Methionine biosynthesis</keyword>
<keyword id="KW-1185">Reference proteome</keyword>
<keyword id="KW-0808">Transferase</keyword>
<name>METXA_MYCMM</name>
<comment type="function">
    <text evidence="1">Transfers an acetyl group from acetyl-CoA to L-homoserine, forming acetyl-L-homoserine.</text>
</comment>
<comment type="catalytic activity">
    <reaction evidence="1">
        <text>L-homoserine + acetyl-CoA = O-acetyl-L-homoserine + CoA</text>
        <dbReference type="Rhea" id="RHEA:13701"/>
        <dbReference type="ChEBI" id="CHEBI:57287"/>
        <dbReference type="ChEBI" id="CHEBI:57288"/>
        <dbReference type="ChEBI" id="CHEBI:57476"/>
        <dbReference type="ChEBI" id="CHEBI:57716"/>
        <dbReference type="EC" id="2.3.1.31"/>
    </reaction>
</comment>
<comment type="pathway">
    <text evidence="1">Amino-acid biosynthesis; L-methionine biosynthesis via de novo pathway; O-acetyl-L-homoserine from L-homoserine: step 1/1.</text>
</comment>
<comment type="subunit">
    <text evidence="1">Homodimer.</text>
</comment>
<comment type="subcellular location">
    <subcellularLocation>
        <location evidence="1">Cytoplasm</location>
    </subcellularLocation>
</comment>
<comment type="similarity">
    <text evidence="1">Belongs to the AB hydrolase superfamily. MetX family.</text>
</comment>
<reference key="1">
    <citation type="journal article" date="2008" name="Genome Res.">
        <title>Insights from the complete genome sequence of Mycobacterium marinum on the evolution of Mycobacterium tuberculosis.</title>
        <authorList>
            <person name="Stinear T.P."/>
            <person name="Seemann T."/>
            <person name="Harrison P.F."/>
            <person name="Jenkin G.A."/>
            <person name="Davies J.K."/>
            <person name="Johnson P.D."/>
            <person name="Abdellah Z."/>
            <person name="Arrowsmith C."/>
            <person name="Chillingworth T."/>
            <person name="Churcher C."/>
            <person name="Clarke K."/>
            <person name="Cronin A."/>
            <person name="Davis P."/>
            <person name="Goodhead I."/>
            <person name="Holroyd N."/>
            <person name="Jagels K."/>
            <person name="Lord A."/>
            <person name="Moule S."/>
            <person name="Mungall K."/>
            <person name="Norbertczak H."/>
            <person name="Quail M.A."/>
            <person name="Rabbinowitsch E."/>
            <person name="Walker D."/>
            <person name="White B."/>
            <person name="Whitehead S."/>
            <person name="Small P.L."/>
            <person name="Brosch R."/>
            <person name="Ramakrishnan L."/>
            <person name="Fischbach M.A."/>
            <person name="Parkhill J."/>
            <person name="Cole S.T."/>
        </authorList>
    </citation>
    <scope>NUCLEOTIDE SEQUENCE [LARGE SCALE GENOMIC DNA]</scope>
    <source>
        <strain>ATCC BAA-535 / M</strain>
    </source>
</reference>
<sequence length="379" mass="40214">MTISDVPTQTLPAEGEVRLVDIGSLRLESGAVIDNVCIALQRWGELSPTRDNVVMVLHALTGDSHVTGPAGPGHSTPGWWDGMVGPGAPIDTNRWCAVATNVLGGCRGSTGPSSLARDGKPWGSRFPLISVRDQVEADMAALAALGITQVAAVVGGSMGGARALEWIVGHPDRVRSALLLAVGARATADQIGTQTTQIAAIKADPNWRNGDYHETGCKPEAGLKVARRFAHLTYRGEIELDSRFANDGQGGEDPADGGRYAIQSYLEHQGDKLLARFDAGSYVILTEALNRHDVGRGRDGIHAALRGCPVPVVVGGITSDRLYPLRLQQELADLLPGCAGLEVVDSIRGHDGFLVESEAVGELIHKTLRLAEDRSSRPW</sequence>
<proteinExistence type="inferred from homology"/>
<dbReference type="EC" id="2.3.1.31" evidence="1"/>
<dbReference type="EMBL" id="CP000854">
    <property type="protein sequence ID" value="ACC39642.1"/>
    <property type="molecule type" value="Genomic_DNA"/>
</dbReference>
<dbReference type="RefSeq" id="WP_012393064.1">
    <property type="nucleotide sequence ID" value="NC_010612.1"/>
</dbReference>
<dbReference type="SMR" id="B2HDS6"/>
<dbReference type="STRING" id="216594.MMAR_1184"/>
<dbReference type="ESTHER" id="mycmm-metx">
    <property type="family name" value="Homoserine_transacetylase"/>
</dbReference>
<dbReference type="GeneID" id="34341414"/>
<dbReference type="KEGG" id="mmi:MMAR_1184"/>
<dbReference type="eggNOG" id="COG2021">
    <property type="taxonomic scope" value="Bacteria"/>
</dbReference>
<dbReference type="HOGENOM" id="CLU_028760_1_0_11"/>
<dbReference type="OrthoDB" id="9800754at2"/>
<dbReference type="UniPathway" id="UPA00051">
    <property type="reaction ID" value="UER00074"/>
</dbReference>
<dbReference type="Proteomes" id="UP000001190">
    <property type="component" value="Chromosome"/>
</dbReference>
<dbReference type="GO" id="GO:0005737">
    <property type="term" value="C:cytoplasm"/>
    <property type="evidence" value="ECO:0007669"/>
    <property type="project" value="UniProtKB-SubCell"/>
</dbReference>
<dbReference type="GO" id="GO:0004414">
    <property type="term" value="F:homoserine O-acetyltransferase activity"/>
    <property type="evidence" value="ECO:0007669"/>
    <property type="project" value="UniProtKB-UniRule"/>
</dbReference>
<dbReference type="GO" id="GO:0009092">
    <property type="term" value="P:homoserine metabolic process"/>
    <property type="evidence" value="ECO:0007669"/>
    <property type="project" value="TreeGrafter"/>
</dbReference>
<dbReference type="GO" id="GO:0009086">
    <property type="term" value="P:methionine biosynthetic process"/>
    <property type="evidence" value="ECO:0007669"/>
    <property type="project" value="UniProtKB-UniRule"/>
</dbReference>
<dbReference type="Gene3D" id="3.40.50.1820">
    <property type="entry name" value="alpha/beta hydrolase"/>
    <property type="match status" value="1"/>
</dbReference>
<dbReference type="HAMAP" id="MF_00296">
    <property type="entry name" value="MetX_acyltransf"/>
    <property type="match status" value="1"/>
</dbReference>
<dbReference type="InterPro" id="IPR000073">
    <property type="entry name" value="AB_hydrolase_1"/>
</dbReference>
<dbReference type="InterPro" id="IPR029058">
    <property type="entry name" value="AB_hydrolase_fold"/>
</dbReference>
<dbReference type="InterPro" id="IPR008220">
    <property type="entry name" value="HAT_MetX-like"/>
</dbReference>
<dbReference type="NCBIfam" id="TIGR01392">
    <property type="entry name" value="homoserO_Ac_trn"/>
    <property type="match status" value="1"/>
</dbReference>
<dbReference type="NCBIfam" id="NF001209">
    <property type="entry name" value="PRK00175.1"/>
    <property type="match status" value="1"/>
</dbReference>
<dbReference type="PANTHER" id="PTHR32268">
    <property type="entry name" value="HOMOSERINE O-ACETYLTRANSFERASE"/>
    <property type="match status" value="1"/>
</dbReference>
<dbReference type="PANTHER" id="PTHR32268:SF11">
    <property type="entry name" value="HOMOSERINE O-ACETYLTRANSFERASE"/>
    <property type="match status" value="1"/>
</dbReference>
<dbReference type="Pfam" id="PF00561">
    <property type="entry name" value="Abhydrolase_1"/>
    <property type="match status" value="1"/>
</dbReference>
<dbReference type="PIRSF" id="PIRSF000443">
    <property type="entry name" value="Homoser_Ac_trans"/>
    <property type="match status" value="1"/>
</dbReference>
<dbReference type="SUPFAM" id="SSF53474">
    <property type="entry name" value="alpha/beta-Hydrolases"/>
    <property type="match status" value="1"/>
</dbReference>
<gene>
    <name evidence="1" type="primary">metXA</name>
    <name type="ordered locus">MMAR_1184</name>
</gene>
<evidence type="ECO:0000255" key="1">
    <source>
        <dbReference type="HAMAP-Rule" id="MF_00296"/>
    </source>
</evidence>
<organism>
    <name type="scientific">Mycobacterium marinum (strain ATCC BAA-535 / M)</name>
    <dbReference type="NCBI Taxonomy" id="216594"/>
    <lineage>
        <taxon>Bacteria</taxon>
        <taxon>Bacillati</taxon>
        <taxon>Actinomycetota</taxon>
        <taxon>Actinomycetes</taxon>
        <taxon>Mycobacteriales</taxon>
        <taxon>Mycobacteriaceae</taxon>
        <taxon>Mycobacterium</taxon>
        <taxon>Mycobacterium ulcerans group</taxon>
    </lineage>
</organism>
<feature type="chain" id="PRO_1000115230" description="Homoserine O-acetyltransferase">
    <location>
        <begin position="1"/>
        <end position="379"/>
    </location>
</feature>
<feature type="domain" description="AB hydrolase-1" evidence="1">
    <location>
        <begin position="52"/>
        <end position="356"/>
    </location>
</feature>
<feature type="active site" description="Nucleophile" evidence="1">
    <location>
        <position position="157"/>
    </location>
</feature>
<feature type="active site" evidence="1">
    <location>
        <position position="320"/>
    </location>
</feature>
<feature type="active site" evidence="1">
    <location>
        <position position="350"/>
    </location>
</feature>
<feature type="binding site" evidence="1">
    <location>
        <position position="227"/>
    </location>
    <ligand>
        <name>substrate</name>
    </ligand>
</feature>
<feature type="binding site" evidence="1">
    <location>
        <position position="351"/>
    </location>
    <ligand>
        <name>substrate</name>
    </ligand>
</feature>
<accession>B2HDS6</accession>